<protein>
    <recommendedName>
        <fullName>Blue-light-activated histidine kinase</fullName>
        <ecNumber>2.7.13.3</ecNumber>
    </recommendedName>
    <alternativeName>
        <fullName>R-LOV-histidine kinase</fullName>
        <shortName>R-LOV-HK</shortName>
    </alternativeName>
</protein>
<sequence length="345" mass="37723">MTPHTKEKLHGDLPSASSKAASADRKELAAIAFERTRMPMVVTDGRKPDLPIVLANKAFLELTGYPAQEVLGRNCRFLQGPATSPIAVAEIRAAIAGEREVSVEILNYKKSGEQFWNRLHLSPVHGDDGKILYFFGSQIDMTEYRRIEALEASEHRLLMEVDHRSKNVLAIVDSIVRLSNADDPALYAAAIQHRVQALARAHTLLAARGWTNISLEELIRQQVTPFAATRAIFNGPDINMPAPVVQPLALVLHELAVNAAHHGALAVAQGRLSISWKPRPSGAGFYIRWQEVGAPTPPKLAKRGFGTVIVGAMVEKQLKGRLQKIWSDEGLLIDIEIPSAGPTCA</sequence>
<keyword id="KW-0067">ATP-binding</keyword>
<keyword id="KW-0157">Chromophore</keyword>
<keyword id="KW-0285">Flavoprotein</keyword>
<keyword id="KW-0288">FMN</keyword>
<keyword id="KW-0418">Kinase</keyword>
<keyword id="KW-0547">Nucleotide-binding</keyword>
<keyword id="KW-0597">Phosphoprotein</keyword>
<keyword id="KW-0600">Photoreceptor protein</keyword>
<keyword id="KW-0614">Plasmid</keyword>
<keyword id="KW-0675">Receptor</keyword>
<keyword id="KW-0716">Sensory transduction</keyword>
<keyword id="KW-0808">Transferase</keyword>
<reference key="1">
    <citation type="journal article" date="2006" name="Genome Biol.">
        <title>The genome of Rhizobium leguminosarum has recognizable core and accessory components.</title>
        <authorList>
            <person name="Young J.P.W."/>
            <person name="Crossman L.C."/>
            <person name="Johnston A.W.B."/>
            <person name="Thomson N.R."/>
            <person name="Ghazoui Z.F."/>
            <person name="Hull K.H."/>
            <person name="Wexler M."/>
            <person name="Curson A.R.J."/>
            <person name="Todd J.D."/>
            <person name="Poole P.S."/>
            <person name="Mauchline T.H."/>
            <person name="East A.K."/>
            <person name="Quail M.A."/>
            <person name="Churcher C."/>
            <person name="Arrowsmith C."/>
            <person name="Cherevach I."/>
            <person name="Chillingworth T."/>
            <person name="Clarke K."/>
            <person name="Cronin A."/>
            <person name="Davis P."/>
            <person name="Fraser A."/>
            <person name="Hance Z."/>
            <person name="Hauser H."/>
            <person name="Jagels K."/>
            <person name="Moule S."/>
            <person name="Mungall K."/>
            <person name="Norbertczak H."/>
            <person name="Rabbinowitsch E."/>
            <person name="Sanders M."/>
            <person name="Simmonds M."/>
            <person name="Whitehead S."/>
            <person name="Parkhill J."/>
        </authorList>
    </citation>
    <scope>NUCLEOTIDE SEQUENCE [LARGE SCALE GENOMIC DNA]</scope>
    <source>
        <strain>DSM 114642 / LMG 32736 / 3841</strain>
    </source>
</reference>
<reference key="2">
    <citation type="journal article" date="2012" name="Proc. Natl. Acad. Sci. U.S.A.">
        <title>Light regulates attachment, exopolysaccharide production, and nodulation in Rhizobium leguminosarum through a LOV-histidine kinase photoreceptor.</title>
        <authorList>
            <person name="Bonomi H.R."/>
            <person name="Posadas D.M."/>
            <person name="Paris G."/>
            <person name="Carrica Mdel C."/>
            <person name="Frederickson M."/>
            <person name="Pietrasanta L.I."/>
            <person name="Bogomolni R.A."/>
            <person name="Zorreguieta A."/>
            <person name="Goldbaum F.A."/>
        </authorList>
    </citation>
    <scope>FUNCTION</scope>
    <scope>FLAVIN CHROMOPHORE</scope>
    <scope>DISRUPTION PHENOTYPE</scope>
    <scope>MUTAGENESIS OF CYS-75 AND HIS-163</scope>
    <source>
        <strain>DSM 114642 / LMG 32736 / 3841</strain>
    </source>
</reference>
<evidence type="ECO:0000255" key="1">
    <source>
        <dbReference type="PROSITE-ProRule" id="PRU00140"/>
    </source>
</evidence>
<evidence type="ECO:0000255" key="2">
    <source>
        <dbReference type="PROSITE-ProRule" id="PRU00141"/>
    </source>
</evidence>
<evidence type="ECO:0000256" key="3">
    <source>
        <dbReference type="SAM" id="MobiDB-lite"/>
    </source>
</evidence>
<evidence type="ECO:0000269" key="4">
    <source>
    </source>
</evidence>
<evidence type="ECO:0000305" key="5"/>
<accession>Q1M667</accession>
<proteinExistence type="evidence at protein level"/>
<dbReference type="EC" id="2.7.13.3"/>
<dbReference type="EMBL" id="AM236085">
    <property type="protein sequence ID" value="CAK03271.1"/>
    <property type="molecule type" value="Genomic_DNA"/>
</dbReference>
<dbReference type="RefSeq" id="WP_011655064.1">
    <property type="nucleotide sequence ID" value="NC_008384.1"/>
</dbReference>
<dbReference type="SMR" id="Q1M667"/>
<dbReference type="EnsemblBacteria" id="CAK03271">
    <property type="protein sequence ID" value="CAK03271"/>
    <property type="gene ID" value="pRL110320"/>
</dbReference>
<dbReference type="KEGG" id="rle:pRL110320"/>
<dbReference type="HOGENOM" id="CLU_000445_114_57_5"/>
<dbReference type="Proteomes" id="UP000006575">
    <property type="component" value="Plasmid pRL11"/>
</dbReference>
<dbReference type="GO" id="GO:0005524">
    <property type="term" value="F:ATP binding"/>
    <property type="evidence" value="ECO:0007669"/>
    <property type="project" value="UniProtKB-KW"/>
</dbReference>
<dbReference type="GO" id="GO:0009881">
    <property type="term" value="F:photoreceptor activity"/>
    <property type="evidence" value="ECO:0007669"/>
    <property type="project" value="UniProtKB-KW"/>
</dbReference>
<dbReference type="GO" id="GO:0004673">
    <property type="term" value="F:protein histidine kinase activity"/>
    <property type="evidence" value="ECO:0007669"/>
    <property type="project" value="UniProtKB-EC"/>
</dbReference>
<dbReference type="CDD" id="cd00130">
    <property type="entry name" value="PAS"/>
    <property type="match status" value="1"/>
</dbReference>
<dbReference type="Gene3D" id="3.30.565.10">
    <property type="entry name" value="Histidine kinase-like ATPase, C-terminal domain"/>
    <property type="match status" value="1"/>
</dbReference>
<dbReference type="Gene3D" id="3.30.450.20">
    <property type="entry name" value="PAS domain"/>
    <property type="match status" value="1"/>
</dbReference>
<dbReference type="InterPro" id="IPR036890">
    <property type="entry name" value="HATPase_C_sf"/>
</dbReference>
<dbReference type="InterPro" id="IPR001610">
    <property type="entry name" value="PAC"/>
</dbReference>
<dbReference type="InterPro" id="IPR000014">
    <property type="entry name" value="PAS"/>
</dbReference>
<dbReference type="InterPro" id="IPR000700">
    <property type="entry name" value="PAS-assoc_C"/>
</dbReference>
<dbReference type="InterPro" id="IPR035965">
    <property type="entry name" value="PAS-like_dom_sf"/>
</dbReference>
<dbReference type="InterPro" id="IPR011102">
    <property type="entry name" value="Sig_transdc_His_kinase_HWE"/>
</dbReference>
<dbReference type="NCBIfam" id="NF010077">
    <property type="entry name" value="PRK13559.1"/>
    <property type="match status" value="1"/>
</dbReference>
<dbReference type="NCBIfam" id="TIGR00229">
    <property type="entry name" value="sensory_box"/>
    <property type="match status" value="1"/>
</dbReference>
<dbReference type="PANTHER" id="PTHR47429">
    <property type="entry name" value="PROTEIN TWIN LOV 1"/>
    <property type="match status" value="1"/>
</dbReference>
<dbReference type="PANTHER" id="PTHR47429:SF2">
    <property type="entry name" value="PROTEIN TWIN LOV 1"/>
    <property type="match status" value="1"/>
</dbReference>
<dbReference type="Pfam" id="PF07536">
    <property type="entry name" value="HWE_HK"/>
    <property type="match status" value="1"/>
</dbReference>
<dbReference type="Pfam" id="PF13426">
    <property type="entry name" value="PAS_9"/>
    <property type="match status" value="1"/>
</dbReference>
<dbReference type="SMART" id="SM00911">
    <property type="entry name" value="HWE_HK"/>
    <property type="match status" value="1"/>
</dbReference>
<dbReference type="SMART" id="SM00086">
    <property type="entry name" value="PAC"/>
    <property type="match status" value="1"/>
</dbReference>
<dbReference type="SMART" id="SM00091">
    <property type="entry name" value="PAS"/>
    <property type="match status" value="1"/>
</dbReference>
<dbReference type="SUPFAM" id="SSF55785">
    <property type="entry name" value="PYP-like sensor domain (PAS domain)"/>
    <property type="match status" value="1"/>
</dbReference>
<dbReference type="PROSITE" id="PS50113">
    <property type="entry name" value="PAC"/>
    <property type="match status" value="1"/>
</dbReference>
<dbReference type="PROSITE" id="PS50112">
    <property type="entry name" value="PAS"/>
    <property type="match status" value="1"/>
</dbReference>
<geneLocation type="plasmid">
    <name>pRL11</name>
</geneLocation>
<name>LOVHK_RHIJ3</name>
<feature type="chain" id="PRO_0000424955" description="Blue-light-activated histidine kinase">
    <location>
        <begin position="1"/>
        <end position="345"/>
    </location>
</feature>
<feature type="domain" description="PAS" evidence="1">
    <location>
        <begin position="25"/>
        <end position="98"/>
    </location>
</feature>
<feature type="domain" description="PAC" evidence="2">
    <location>
        <begin position="99"/>
        <end position="153"/>
    </location>
</feature>
<feature type="region of interest" description="Disordered" evidence="3">
    <location>
        <begin position="1"/>
        <end position="21"/>
    </location>
</feature>
<feature type="region of interest" description="HWE histidine kinase domain">
    <location>
        <begin position="160"/>
        <end position="236"/>
    </location>
</feature>
<feature type="compositionally biased region" description="Basic and acidic residues" evidence="3">
    <location>
        <begin position="1"/>
        <end position="11"/>
    </location>
</feature>
<feature type="modified residue" description="S-4a-FMN cysteine" evidence="5">
    <location>
        <position position="75"/>
    </location>
</feature>
<feature type="modified residue" description="Phosphohistidine; by autocatalysis" evidence="5">
    <location>
        <position position="163"/>
    </location>
</feature>
<feature type="mutagenesis site" description="Lack of activity." evidence="4">
    <original>C</original>
    <variation>A</variation>
    <location>
        <position position="75"/>
    </location>
</feature>
<feature type="mutagenesis site" description="Lack of activity." evidence="4">
    <original>H</original>
    <variation>A</variation>
    <location>
        <position position="163"/>
    </location>
</feature>
<comment type="function">
    <text evidence="4">Photoreceptor that regulates flagella synthesis, exopolysaccharide production and biofilm formation in response to light. Also required for competitive nodulation.</text>
</comment>
<comment type="catalytic activity">
    <reaction>
        <text>ATP + protein L-histidine = ADP + protein N-phospho-L-histidine.</text>
        <dbReference type="EC" id="2.7.13.3"/>
    </reaction>
</comment>
<comment type="PTM">
    <text evidence="4">FMN binds covalently to cysteine after exposure to blue light (Probable).</text>
</comment>
<comment type="disruption phenotype">
    <text evidence="4">Mutant produces similar amounts of exopolysaccharides and shows no significant differences in the biofilm biomass between light and dark conditions. Mutant also forms a higher number of white nodules compared with the wild-type, independently of the illumination conditions.</text>
</comment>
<gene>
    <name type="primary">lov</name>
    <name type="ordered locus">pRL110320</name>
</gene>
<organism>
    <name type="scientific">Rhizobium johnstonii (strain DSM 114642 / LMG 32736 / 3841)</name>
    <name type="common">Rhizobium leguminosarum bv. viciae</name>
    <dbReference type="NCBI Taxonomy" id="216596"/>
    <lineage>
        <taxon>Bacteria</taxon>
        <taxon>Pseudomonadati</taxon>
        <taxon>Pseudomonadota</taxon>
        <taxon>Alphaproteobacteria</taxon>
        <taxon>Hyphomicrobiales</taxon>
        <taxon>Rhizobiaceae</taxon>
        <taxon>Rhizobium/Agrobacterium group</taxon>
        <taxon>Rhizobium</taxon>
        <taxon>Rhizobium johnstonii</taxon>
    </lineage>
</organism>